<protein>
    <recommendedName>
        <fullName>Proto-oncogene Mas</fullName>
    </recommendedName>
</protein>
<name>MAS_MOUSE</name>
<keyword id="KW-1003">Cell membrane</keyword>
<keyword id="KW-0297">G-protein coupled receptor</keyword>
<keyword id="KW-0325">Glycoprotein</keyword>
<keyword id="KW-0472">Membrane</keyword>
<keyword id="KW-0656">Proto-oncogene</keyword>
<keyword id="KW-0675">Receptor</keyword>
<keyword id="KW-1185">Reference proteome</keyword>
<keyword id="KW-0807">Transducer</keyword>
<keyword id="KW-0812">Transmembrane</keyword>
<keyword id="KW-1133">Transmembrane helix</keyword>
<proteinExistence type="evidence at protein level"/>
<dbReference type="EMBL" id="X67735">
    <property type="protein sequence ID" value="CAA47964.1"/>
    <property type="molecule type" value="Genomic_DNA"/>
</dbReference>
<dbReference type="EMBL" id="AK030261">
    <property type="protein sequence ID" value="BAC26865.1"/>
    <property type="molecule type" value="mRNA"/>
</dbReference>
<dbReference type="EMBL" id="AK030265">
    <property type="protein sequence ID" value="BAC26868.1"/>
    <property type="molecule type" value="mRNA"/>
</dbReference>
<dbReference type="EMBL" id="U96273">
    <property type="protein sequence ID" value="AAB69120.1"/>
    <property type="molecule type" value="mRNA"/>
</dbReference>
<dbReference type="CCDS" id="CCDS28394.1"/>
<dbReference type="PIR" id="S51001">
    <property type="entry name" value="S51001"/>
</dbReference>
<dbReference type="RefSeq" id="NP_032578.2">
    <property type="nucleotide sequence ID" value="NM_008552.5"/>
</dbReference>
<dbReference type="RefSeq" id="XP_006523356.1">
    <property type="nucleotide sequence ID" value="XM_006523293.5"/>
</dbReference>
<dbReference type="RefSeq" id="XP_006523357.1">
    <property type="nucleotide sequence ID" value="XM_006523294.4"/>
</dbReference>
<dbReference type="RefSeq" id="XP_006523359.1">
    <property type="nucleotide sequence ID" value="XM_006523296.5"/>
</dbReference>
<dbReference type="RefSeq" id="XP_006523360.1">
    <property type="nucleotide sequence ID" value="XM_006523297.3"/>
</dbReference>
<dbReference type="RefSeq" id="XP_006523362.1">
    <property type="nucleotide sequence ID" value="XM_006523299.3"/>
</dbReference>
<dbReference type="RefSeq" id="XP_011244492.1">
    <property type="nucleotide sequence ID" value="XM_011246190.3"/>
</dbReference>
<dbReference type="RefSeq" id="XP_011244493.1">
    <property type="nucleotide sequence ID" value="XM_011246191.3"/>
</dbReference>
<dbReference type="RefSeq" id="XP_011244494.1">
    <property type="nucleotide sequence ID" value="XM_011246192.3"/>
</dbReference>
<dbReference type="RefSeq" id="XP_011244495.1">
    <property type="nucleotide sequence ID" value="XM_011246193.3"/>
</dbReference>
<dbReference type="RefSeq" id="XP_017172759.1">
    <property type="nucleotide sequence ID" value="XM_017317270.2"/>
</dbReference>
<dbReference type="RefSeq" id="XP_017172760.1">
    <property type="nucleotide sequence ID" value="XM_017317271.1"/>
</dbReference>
<dbReference type="RefSeq" id="XP_017172761.1">
    <property type="nucleotide sequence ID" value="XM_017317272.1"/>
</dbReference>
<dbReference type="RefSeq" id="XP_017172762.1">
    <property type="nucleotide sequence ID" value="XM_017317273.1"/>
</dbReference>
<dbReference type="RefSeq" id="XP_017172763.1">
    <property type="nucleotide sequence ID" value="XM_017317274.1"/>
</dbReference>
<dbReference type="RefSeq" id="XP_030105383.1">
    <property type="nucleotide sequence ID" value="XM_030249523.2"/>
</dbReference>
<dbReference type="RefSeq" id="XP_030105384.1">
    <property type="nucleotide sequence ID" value="XM_030249524.2"/>
</dbReference>
<dbReference type="SMR" id="P30554"/>
<dbReference type="BioGRID" id="201313">
    <property type="interactions" value="1"/>
</dbReference>
<dbReference type="FunCoup" id="P30554">
    <property type="interactions" value="643"/>
</dbReference>
<dbReference type="STRING" id="10090.ENSMUSP00000086409"/>
<dbReference type="GuidetoPHARMACOLOGY" id="150"/>
<dbReference type="GlyCosmos" id="P30554">
    <property type="glycosylation" value="3 sites, No reported glycans"/>
</dbReference>
<dbReference type="GlyGen" id="P30554">
    <property type="glycosylation" value="3 sites"/>
</dbReference>
<dbReference type="iPTMnet" id="P30554"/>
<dbReference type="PhosphoSitePlus" id="P30554"/>
<dbReference type="PaxDb" id="10090-ENSMUSP00000086409"/>
<dbReference type="ProteomicsDB" id="295834"/>
<dbReference type="Antibodypedia" id="2936">
    <property type="antibodies" value="359 antibodies from 30 providers"/>
</dbReference>
<dbReference type="DNASU" id="17171"/>
<dbReference type="Ensembl" id="ENSMUST00000089015.10">
    <property type="protein sequence ID" value="ENSMUSP00000086409.4"/>
    <property type="gene ID" value="ENSMUSG00000068037.12"/>
</dbReference>
<dbReference type="Ensembl" id="ENSMUST00000161747.8">
    <property type="protein sequence ID" value="ENSMUSP00000123902.2"/>
    <property type="gene ID" value="ENSMUSG00000068037.12"/>
</dbReference>
<dbReference type="Ensembl" id="ENSMUST00000162333.8">
    <property type="protein sequence ID" value="ENSMUSP00000125108.2"/>
    <property type="gene ID" value="ENSMUSG00000068037.12"/>
</dbReference>
<dbReference type="Ensembl" id="ENSMUST00000165020.8">
    <property type="protein sequence ID" value="ENSMUSP00000132300.2"/>
    <property type="gene ID" value="ENSMUSG00000068037.12"/>
</dbReference>
<dbReference type="Ensembl" id="ENSMUST00000167152.8">
    <property type="protein sequence ID" value="ENSMUSP00000131341.2"/>
    <property type="gene ID" value="ENSMUSG00000068037.12"/>
</dbReference>
<dbReference type="Ensembl" id="ENSMUST00000233607.2">
    <property type="protein sequence ID" value="ENSMUSP00000156871.2"/>
    <property type="gene ID" value="ENSMUSG00000068037.12"/>
</dbReference>
<dbReference type="GeneID" id="17171"/>
<dbReference type="KEGG" id="mmu:17171"/>
<dbReference type="UCSC" id="uc008ald.2">
    <property type="organism name" value="mouse"/>
</dbReference>
<dbReference type="AGR" id="MGI:96918"/>
<dbReference type="CTD" id="4142"/>
<dbReference type="MGI" id="MGI:96918">
    <property type="gene designation" value="Mas1"/>
</dbReference>
<dbReference type="VEuPathDB" id="HostDB:ENSMUSG00000068037"/>
<dbReference type="eggNOG" id="KOG3656">
    <property type="taxonomic scope" value="Eukaryota"/>
</dbReference>
<dbReference type="GeneTree" id="ENSGT01030000234639"/>
<dbReference type="HOGENOM" id="CLU_009579_4_1_1"/>
<dbReference type="InParanoid" id="P30554"/>
<dbReference type="OMA" id="DGNHCQA"/>
<dbReference type="OrthoDB" id="6091802at2759"/>
<dbReference type="PhylomeDB" id="P30554"/>
<dbReference type="TreeFam" id="TF336336"/>
<dbReference type="BioGRID-ORCS" id="17171">
    <property type="hits" value="2 hits in 76 CRISPR screens"/>
</dbReference>
<dbReference type="PRO" id="PR:P30554"/>
<dbReference type="Proteomes" id="UP000000589">
    <property type="component" value="Chromosome 17"/>
</dbReference>
<dbReference type="RNAct" id="P30554">
    <property type="molecule type" value="protein"/>
</dbReference>
<dbReference type="Bgee" id="ENSMUSG00000068037">
    <property type="expression patterns" value="Expressed in dentate gyrus of hippocampal formation granule cell and 80 other cell types or tissues"/>
</dbReference>
<dbReference type="ExpressionAtlas" id="P30554">
    <property type="expression patterns" value="baseline and differential"/>
</dbReference>
<dbReference type="GO" id="GO:0005886">
    <property type="term" value="C:plasma membrane"/>
    <property type="evidence" value="ECO:0007669"/>
    <property type="project" value="UniProtKB-SubCell"/>
</dbReference>
<dbReference type="GO" id="GO:0001595">
    <property type="term" value="F:angiotensin receptor activity"/>
    <property type="evidence" value="ECO:0000315"/>
    <property type="project" value="UniProtKB"/>
</dbReference>
<dbReference type="GO" id="GO:0008528">
    <property type="term" value="F:G protein-coupled peptide receptor activity"/>
    <property type="evidence" value="ECO:0000314"/>
    <property type="project" value="MGI"/>
</dbReference>
<dbReference type="GO" id="GO:0042277">
    <property type="term" value="F:peptide binding"/>
    <property type="evidence" value="ECO:0000315"/>
    <property type="project" value="UniProtKB"/>
</dbReference>
<dbReference type="GO" id="GO:0007189">
    <property type="term" value="P:adenylate cyclase-activating G protein-coupled receptor signaling pathway"/>
    <property type="evidence" value="ECO:0000315"/>
    <property type="project" value="MGI"/>
</dbReference>
<dbReference type="GO" id="GO:0002033">
    <property type="term" value="P:angiotensin-mediated vasodilation involved in regulation of systemic arterial blood pressure"/>
    <property type="evidence" value="ECO:0000315"/>
    <property type="project" value="MGI"/>
</dbReference>
<dbReference type="GO" id="GO:0007186">
    <property type="term" value="P:G protein-coupled receptor signaling pathway"/>
    <property type="evidence" value="ECO:0000315"/>
    <property type="project" value="MGI"/>
</dbReference>
<dbReference type="GO" id="GO:0086097">
    <property type="term" value="P:phospholipase C-activating angiotensin-activated signaling pathway"/>
    <property type="evidence" value="ECO:0007669"/>
    <property type="project" value="Ensembl"/>
</dbReference>
<dbReference type="GO" id="GO:0043123">
    <property type="term" value="P:positive regulation of canonical NF-kappaB signal transduction"/>
    <property type="evidence" value="ECO:0000315"/>
    <property type="project" value="MGI"/>
</dbReference>
<dbReference type="GO" id="GO:0050727">
    <property type="term" value="P:regulation of inflammatory response"/>
    <property type="evidence" value="ECO:0000315"/>
    <property type="project" value="MGI"/>
</dbReference>
<dbReference type="CDD" id="cd15110">
    <property type="entry name" value="7tmA_MrgprH"/>
    <property type="match status" value="1"/>
</dbReference>
<dbReference type="FunFam" id="1.20.1070.10:FF:000134">
    <property type="entry name" value="proto-oncogene Mas"/>
    <property type="match status" value="1"/>
</dbReference>
<dbReference type="Gene3D" id="1.20.1070.10">
    <property type="entry name" value="Rhodopsin 7-helix transmembrane proteins"/>
    <property type="match status" value="1"/>
</dbReference>
<dbReference type="InterPro" id="IPR000276">
    <property type="entry name" value="GPCR_Rhodpsn"/>
</dbReference>
<dbReference type="InterPro" id="IPR017452">
    <property type="entry name" value="GPCR_Rhodpsn_7TM"/>
</dbReference>
<dbReference type="InterPro" id="IPR026234">
    <property type="entry name" value="MRGPCRFAMILY"/>
</dbReference>
<dbReference type="InterPro" id="IPR000820">
    <property type="entry name" value="Proto-oncogene_Mas"/>
</dbReference>
<dbReference type="PANTHER" id="PTHR11334">
    <property type="entry name" value="MAS-RELATED G-PROTEIN COUPLED RECEPTOR"/>
    <property type="match status" value="1"/>
</dbReference>
<dbReference type="PANTHER" id="PTHR11334:SF61">
    <property type="entry name" value="PROTO-ONCOGENE MAS"/>
    <property type="match status" value="1"/>
</dbReference>
<dbReference type="Pfam" id="PF00001">
    <property type="entry name" value="7tm_1"/>
    <property type="match status" value="1"/>
</dbReference>
<dbReference type="PRINTS" id="PR00237">
    <property type="entry name" value="GPCRRHODOPSN"/>
</dbReference>
<dbReference type="PRINTS" id="PR00533">
    <property type="entry name" value="MASONCOGENE"/>
</dbReference>
<dbReference type="SUPFAM" id="SSF81321">
    <property type="entry name" value="Family A G protein-coupled receptor-like"/>
    <property type="match status" value="1"/>
</dbReference>
<dbReference type="PROSITE" id="PS00237">
    <property type="entry name" value="G_PROTEIN_RECEP_F1_1"/>
    <property type="match status" value="1"/>
</dbReference>
<dbReference type="PROSITE" id="PS50262">
    <property type="entry name" value="G_PROTEIN_RECEP_F1_2"/>
    <property type="match status" value="1"/>
</dbReference>
<gene>
    <name type="primary">Mas1</name>
    <name type="synonym">Mas</name>
    <name type="synonym">Mas-1</name>
</gene>
<reference key="1">
    <citation type="journal article" date="1995" name="FEBS Lett.">
        <title>Expression of the mouse and rat mas proto-oncogene in the brain and peripheral tissues.</title>
        <authorList>
            <person name="Metzger R."/>
            <person name="Bader M."/>
            <person name="Ludwig T."/>
            <person name="Berberich C."/>
            <person name="Bunnemann B."/>
            <person name="Ganten D."/>
        </authorList>
    </citation>
    <scope>NUCLEOTIDE SEQUENCE [GENOMIC DNA]</scope>
    <source>
        <strain>BALB/cJ</strain>
        <tissue>Liver</tissue>
    </source>
</reference>
<reference key="2">
    <citation type="journal article" date="2005" name="Science">
        <title>The transcriptional landscape of the mammalian genome.</title>
        <authorList>
            <person name="Carninci P."/>
            <person name="Kasukawa T."/>
            <person name="Katayama S."/>
            <person name="Gough J."/>
            <person name="Frith M.C."/>
            <person name="Maeda N."/>
            <person name="Oyama R."/>
            <person name="Ravasi T."/>
            <person name="Lenhard B."/>
            <person name="Wells C."/>
            <person name="Kodzius R."/>
            <person name="Shimokawa K."/>
            <person name="Bajic V.B."/>
            <person name="Brenner S.E."/>
            <person name="Batalov S."/>
            <person name="Forrest A.R."/>
            <person name="Zavolan M."/>
            <person name="Davis M.J."/>
            <person name="Wilming L.G."/>
            <person name="Aidinis V."/>
            <person name="Allen J.E."/>
            <person name="Ambesi-Impiombato A."/>
            <person name="Apweiler R."/>
            <person name="Aturaliya R.N."/>
            <person name="Bailey T.L."/>
            <person name="Bansal M."/>
            <person name="Baxter L."/>
            <person name="Beisel K.W."/>
            <person name="Bersano T."/>
            <person name="Bono H."/>
            <person name="Chalk A.M."/>
            <person name="Chiu K.P."/>
            <person name="Choudhary V."/>
            <person name="Christoffels A."/>
            <person name="Clutterbuck D.R."/>
            <person name="Crowe M.L."/>
            <person name="Dalla E."/>
            <person name="Dalrymple B.P."/>
            <person name="de Bono B."/>
            <person name="Della Gatta G."/>
            <person name="di Bernardo D."/>
            <person name="Down T."/>
            <person name="Engstrom P."/>
            <person name="Fagiolini M."/>
            <person name="Faulkner G."/>
            <person name="Fletcher C.F."/>
            <person name="Fukushima T."/>
            <person name="Furuno M."/>
            <person name="Futaki S."/>
            <person name="Gariboldi M."/>
            <person name="Georgii-Hemming P."/>
            <person name="Gingeras T.R."/>
            <person name="Gojobori T."/>
            <person name="Green R.E."/>
            <person name="Gustincich S."/>
            <person name="Harbers M."/>
            <person name="Hayashi Y."/>
            <person name="Hensch T.K."/>
            <person name="Hirokawa N."/>
            <person name="Hill D."/>
            <person name="Huminiecki L."/>
            <person name="Iacono M."/>
            <person name="Ikeo K."/>
            <person name="Iwama A."/>
            <person name="Ishikawa T."/>
            <person name="Jakt M."/>
            <person name="Kanapin A."/>
            <person name="Katoh M."/>
            <person name="Kawasawa Y."/>
            <person name="Kelso J."/>
            <person name="Kitamura H."/>
            <person name="Kitano H."/>
            <person name="Kollias G."/>
            <person name="Krishnan S.P."/>
            <person name="Kruger A."/>
            <person name="Kummerfeld S.K."/>
            <person name="Kurochkin I.V."/>
            <person name="Lareau L.F."/>
            <person name="Lazarevic D."/>
            <person name="Lipovich L."/>
            <person name="Liu J."/>
            <person name="Liuni S."/>
            <person name="McWilliam S."/>
            <person name="Madan Babu M."/>
            <person name="Madera M."/>
            <person name="Marchionni L."/>
            <person name="Matsuda H."/>
            <person name="Matsuzawa S."/>
            <person name="Miki H."/>
            <person name="Mignone F."/>
            <person name="Miyake S."/>
            <person name="Morris K."/>
            <person name="Mottagui-Tabar S."/>
            <person name="Mulder N."/>
            <person name="Nakano N."/>
            <person name="Nakauchi H."/>
            <person name="Ng P."/>
            <person name="Nilsson R."/>
            <person name="Nishiguchi S."/>
            <person name="Nishikawa S."/>
            <person name="Nori F."/>
            <person name="Ohara O."/>
            <person name="Okazaki Y."/>
            <person name="Orlando V."/>
            <person name="Pang K.C."/>
            <person name="Pavan W.J."/>
            <person name="Pavesi G."/>
            <person name="Pesole G."/>
            <person name="Petrovsky N."/>
            <person name="Piazza S."/>
            <person name="Reed J."/>
            <person name="Reid J.F."/>
            <person name="Ring B.Z."/>
            <person name="Ringwald M."/>
            <person name="Rost B."/>
            <person name="Ruan Y."/>
            <person name="Salzberg S.L."/>
            <person name="Sandelin A."/>
            <person name="Schneider C."/>
            <person name="Schoenbach C."/>
            <person name="Sekiguchi K."/>
            <person name="Semple C.A."/>
            <person name="Seno S."/>
            <person name="Sessa L."/>
            <person name="Sheng Y."/>
            <person name="Shibata Y."/>
            <person name="Shimada H."/>
            <person name="Shimada K."/>
            <person name="Silva D."/>
            <person name="Sinclair B."/>
            <person name="Sperling S."/>
            <person name="Stupka E."/>
            <person name="Sugiura K."/>
            <person name="Sultana R."/>
            <person name="Takenaka Y."/>
            <person name="Taki K."/>
            <person name="Tammoja K."/>
            <person name="Tan S.L."/>
            <person name="Tang S."/>
            <person name="Taylor M.S."/>
            <person name="Tegner J."/>
            <person name="Teichmann S.A."/>
            <person name="Ueda H.R."/>
            <person name="van Nimwegen E."/>
            <person name="Verardo R."/>
            <person name="Wei C.L."/>
            <person name="Yagi K."/>
            <person name="Yamanishi H."/>
            <person name="Zabarovsky E."/>
            <person name="Zhu S."/>
            <person name="Zimmer A."/>
            <person name="Hide W."/>
            <person name="Bult C."/>
            <person name="Grimmond S.M."/>
            <person name="Teasdale R.D."/>
            <person name="Liu E.T."/>
            <person name="Brusic V."/>
            <person name="Quackenbush J."/>
            <person name="Wahlestedt C."/>
            <person name="Mattick J.S."/>
            <person name="Hume D.A."/>
            <person name="Kai C."/>
            <person name="Sasaki D."/>
            <person name="Tomaru Y."/>
            <person name="Fukuda S."/>
            <person name="Kanamori-Katayama M."/>
            <person name="Suzuki M."/>
            <person name="Aoki J."/>
            <person name="Arakawa T."/>
            <person name="Iida J."/>
            <person name="Imamura K."/>
            <person name="Itoh M."/>
            <person name="Kato T."/>
            <person name="Kawaji H."/>
            <person name="Kawagashira N."/>
            <person name="Kawashima T."/>
            <person name="Kojima M."/>
            <person name="Kondo S."/>
            <person name="Konno H."/>
            <person name="Nakano K."/>
            <person name="Ninomiya N."/>
            <person name="Nishio T."/>
            <person name="Okada M."/>
            <person name="Plessy C."/>
            <person name="Shibata K."/>
            <person name="Shiraki T."/>
            <person name="Suzuki S."/>
            <person name="Tagami M."/>
            <person name="Waki K."/>
            <person name="Watahiki A."/>
            <person name="Okamura-Oho Y."/>
            <person name="Suzuki H."/>
            <person name="Kawai J."/>
            <person name="Hayashizaki Y."/>
        </authorList>
    </citation>
    <scope>NUCLEOTIDE SEQUENCE [LARGE SCALE MRNA]</scope>
    <source>
        <strain>C57BL/6J</strain>
        <tissue>Testis</tissue>
    </source>
</reference>
<reference key="3">
    <citation type="journal article" date="1997" name="Genomics">
        <title>Characterization of the C3 YAC contig from proximal mouse chromosome 17 and analysis of allelic expression of genes flanking the imprinted Igf2r gene.</title>
        <authorList>
            <person name="Schweifer N."/>
            <person name="Valk P.J."/>
            <person name="Delwel R."/>
            <person name="Cox R."/>
            <person name="Francis F."/>
            <person name="Meier-Ewert S."/>
            <person name="Lehrach H."/>
            <person name="Barlow D.P."/>
        </authorList>
    </citation>
    <scope>NUCLEOTIDE SEQUENCE [MRNA] OF 1-25</scope>
    <source>
        <strain>BCBA</strain>
        <tissue>Testis</tissue>
    </source>
</reference>
<reference key="4">
    <citation type="journal article" date="2003" name="Proc. Natl. Acad. Sci. U.S.A.">
        <title>Angiotensin-(1-7) is an endogenous ligand for the G protein-coupled receptor Mas.</title>
        <authorList>
            <person name="Santos R.A.S."/>
            <person name="Simoes e Silva A.C."/>
            <person name="Maric C."/>
            <person name="Silva D.M.R."/>
            <person name="Machado R.P."/>
            <person name="de Buhr I."/>
            <person name="Heringer-Walther S."/>
            <person name="Pinheiro S.V.B."/>
            <person name="Lopes M.T."/>
            <person name="Bader M."/>
            <person name="Mendes E.P."/>
            <person name="Lemos V.S."/>
            <person name="Campagnole-Santos M.J."/>
            <person name="Schultheiss H.-P."/>
            <person name="Speth R."/>
            <person name="Walther T."/>
        </authorList>
    </citation>
    <scope>FUNCTION AS RECEPTOR FOR ANGIOTENSIN 1-7</scope>
</reference>
<evidence type="ECO:0000250" key="1"/>
<evidence type="ECO:0000250" key="2">
    <source>
        <dbReference type="UniProtKB" id="P04201"/>
    </source>
</evidence>
<evidence type="ECO:0000255" key="3"/>
<evidence type="ECO:0000255" key="4">
    <source>
        <dbReference type="PROSITE-ProRule" id="PRU00521"/>
    </source>
</evidence>
<evidence type="ECO:0000269" key="5">
    <source>
    </source>
</evidence>
<evidence type="ECO:0000305" key="6"/>
<sequence length="324" mass="37055">MDQSNMTSLAEEKAMNTSSRNASLGSSHPPIPIVHWVIMSISPLGFVENGILLWFLCFRMRRNPFTVYITHLSIADISLLFCIFILSIDYALDYELSSGHHYTIVTLSVTFLFGYNTGLYLLTAISVERCLSVLYPIWYRCHRPKHQSAFVCALLWALSCLVTTMEYVMCIDSGEESHSRSDCRAVIIFIAILSFLVFTPLMLVSSTILVVKIRKNTWASHSSKLYIVIMVTIIIFLIFAMPMRVLYLLYYEYWSAFGNLHNISLLFSTINSSANPFIYFFVGSSKKKRFRESLKVVLTRAFKDEMQPRRQEGNGNTVSIETVV</sequence>
<accession>P30554</accession>
<accession>O35944</accession>
<accession>Q8BHI8</accession>
<comment type="function">
    <text evidence="1 5">Acts specifically as a functional antagonist of AGTR1 (angiotensin-2 type 1 receptor), although it up-regulates AGTR1 receptor levels. Positive regulation of AGTR1 levels occurs through activation of the G-proteins GNA11 and GNAQ, and stimulation of the protein kinase C signaling cascade. The antagonist effect on AGTR1 function is probably due to AGTR1 being physically altered by MAS1 (By similarity). Receptor for angiotensin 1-7.</text>
</comment>
<comment type="subunit">
    <text evidence="2">Interacts with AGTR1. Interacts with FLNA (via filamin repeat 21); increases PKA-mediated phosphorylation of FLNA.</text>
</comment>
<comment type="subcellular location">
    <subcellularLocation>
        <location>Cell membrane</location>
        <topology>Multi-pass membrane protein</topology>
    </subcellularLocation>
</comment>
<comment type="similarity">
    <text evidence="4">Belongs to the G-protein coupled receptor 1 family.</text>
</comment>
<organism>
    <name type="scientific">Mus musculus</name>
    <name type="common">Mouse</name>
    <dbReference type="NCBI Taxonomy" id="10090"/>
    <lineage>
        <taxon>Eukaryota</taxon>
        <taxon>Metazoa</taxon>
        <taxon>Chordata</taxon>
        <taxon>Craniata</taxon>
        <taxon>Vertebrata</taxon>
        <taxon>Euteleostomi</taxon>
        <taxon>Mammalia</taxon>
        <taxon>Eutheria</taxon>
        <taxon>Euarchontoglires</taxon>
        <taxon>Glires</taxon>
        <taxon>Rodentia</taxon>
        <taxon>Myomorpha</taxon>
        <taxon>Muroidea</taxon>
        <taxon>Muridae</taxon>
        <taxon>Murinae</taxon>
        <taxon>Mus</taxon>
        <taxon>Mus</taxon>
    </lineage>
</organism>
<feature type="chain" id="PRO_0000069715" description="Proto-oncogene Mas">
    <location>
        <begin position="1"/>
        <end position="324"/>
    </location>
</feature>
<feature type="topological domain" description="Extracellular" evidence="3">
    <location>
        <begin position="1"/>
        <end position="35"/>
    </location>
</feature>
<feature type="transmembrane region" description="Helical; Name=1" evidence="3">
    <location>
        <begin position="36"/>
        <end position="60"/>
    </location>
</feature>
<feature type="topological domain" description="Cytoplasmic" evidence="3">
    <location>
        <begin position="61"/>
        <end position="64"/>
    </location>
</feature>
<feature type="transmembrane region" description="Helical; Name=2" evidence="3">
    <location>
        <begin position="65"/>
        <end position="86"/>
    </location>
</feature>
<feature type="topological domain" description="Extracellular" evidence="3">
    <location>
        <begin position="87"/>
        <end position="103"/>
    </location>
</feature>
<feature type="transmembrane region" description="Helical; Name=3" evidence="3">
    <location>
        <begin position="104"/>
        <end position="127"/>
    </location>
</feature>
<feature type="topological domain" description="Cytoplasmic" evidence="3">
    <location>
        <begin position="128"/>
        <end position="148"/>
    </location>
</feature>
<feature type="transmembrane region" description="Helical; Name=4" evidence="3">
    <location>
        <begin position="149"/>
        <end position="171"/>
    </location>
</feature>
<feature type="topological domain" description="Extracellular" evidence="3">
    <location>
        <begin position="172"/>
        <end position="184"/>
    </location>
</feature>
<feature type="transmembrane region" description="Helical; Name=5" evidence="3">
    <location>
        <begin position="185"/>
        <end position="205"/>
    </location>
</feature>
<feature type="topological domain" description="Cytoplasmic" evidence="3">
    <location>
        <begin position="206"/>
        <end position="223"/>
    </location>
</feature>
<feature type="transmembrane region" description="Helical; Name=6" evidence="3">
    <location>
        <begin position="224"/>
        <end position="244"/>
    </location>
</feature>
<feature type="topological domain" description="Extracellular" evidence="3">
    <location>
        <begin position="245"/>
        <end position="262"/>
    </location>
</feature>
<feature type="transmembrane region" description="Helical; Name=7" evidence="3">
    <location>
        <begin position="263"/>
        <end position="283"/>
    </location>
</feature>
<feature type="topological domain" description="Cytoplasmic" evidence="3">
    <location>
        <begin position="284"/>
        <end position="324"/>
    </location>
</feature>
<feature type="glycosylation site" description="N-linked (GlcNAc...) asparagine" evidence="3">
    <location>
        <position position="5"/>
    </location>
</feature>
<feature type="glycosylation site" description="N-linked (GlcNAc...) asparagine" evidence="3">
    <location>
        <position position="16"/>
    </location>
</feature>
<feature type="glycosylation site" description="N-linked (GlcNAc...) asparagine" evidence="3">
    <location>
        <position position="21"/>
    </location>
</feature>
<feature type="sequence conflict" description="In Ref. 2; AAB69120." evidence="6" ref="2">
    <original>S</original>
    <variation>I</variation>
    <location>
        <position position="19"/>
    </location>
</feature>
<feature type="sequence conflict" description="In Ref. 1; CAA47964." evidence="6" ref="1">
    <original>I</original>
    <variation>M</variation>
    <location>
        <position position="74"/>
    </location>
</feature>
<feature type="sequence conflict" description="In Ref. 1; CAA47964." evidence="6" ref="1">
    <original>RC</original>
    <variation>TS</variation>
    <location>
        <begin position="140"/>
        <end position="141"/>
    </location>
</feature>
<feature type="sequence conflict" description="In Ref. 1; CAA47964." evidence="6" ref="1">
    <original>W</original>
    <variation>C</variation>
    <location>
        <position position="156"/>
    </location>
</feature>
<feature type="sequence conflict" description="In Ref. 1; CAA47964." evidence="6" ref="1">
    <original>T</original>
    <variation>S</variation>
    <location>
        <position position="207"/>
    </location>
</feature>